<sequence length="214" mass="24098">MAQSKFLREYKLVVVGGGGVGKSCLTIQLIQSHFVDEYDPTIEDSYRKQCVIDDEVALLDVLDTAGQEEYSAMREQYMRTGEGFLLVYSITSRQSFEEITTFQQQILRVKDKDYFPMVVVGNKCDLEGEREVTRQEGEALARSFNCKFIETSAKSRINVDKAFYDIVREIRRYNREMQGYSTGSGGSNAGGPSNKMEVNDSDAEAGCCSKCVLM</sequence>
<dbReference type="EMBL" id="CM001233">
    <property type="protein sequence ID" value="EHA52226.1"/>
    <property type="molecule type" value="Genomic_DNA"/>
</dbReference>
<dbReference type="RefSeq" id="XP_003712033.1">
    <property type="nucleotide sequence ID" value="XM_003711985.1"/>
</dbReference>
<dbReference type="SMR" id="G4MZY8"/>
<dbReference type="FunCoup" id="G4MZY8">
    <property type="interactions" value="470"/>
</dbReference>
<dbReference type="STRING" id="242507.G4MZY8"/>
<dbReference type="EnsemblFungi" id="MGG_06154T0">
    <property type="protein sequence ID" value="MGG_06154T0"/>
    <property type="gene ID" value="MGG_06154"/>
</dbReference>
<dbReference type="GeneID" id="2684336"/>
<dbReference type="KEGG" id="mgr:MGG_06154"/>
<dbReference type="VEuPathDB" id="FungiDB:MGG_06154"/>
<dbReference type="eggNOG" id="KOG0395">
    <property type="taxonomic scope" value="Eukaryota"/>
</dbReference>
<dbReference type="HOGENOM" id="CLU_041217_9_8_1"/>
<dbReference type="InParanoid" id="G4MZY8"/>
<dbReference type="OMA" id="CCGGCVI"/>
<dbReference type="OrthoDB" id="5976022at2759"/>
<dbReference type="Proteomes" id="UP000009058">
    <property type="component" value="Chromosome 3"/>
</dbReference>
<dbReference type="GO" id="GO:0005886">
    <property type="term" value="C:plasma membrane"/>
    <property type="evidence" value="ECO:0007669"/>
    <property type="project" value="UniProtKB-SubCell"/>
</dbReference>
<dbReference type="GO" id="GO:0005525">
    <property type="term" value="F:GTP binding"/>
    <property type="evidence" value="ECO:0007669"/>
    <property type="project" value="UniProtKB-KW"/>
</dbReference>
<dbReference type="GO" id="GO:0003924">
    <property type="term" value="F:GTPase activity"/>
    <property type="evidence" value="ECO:0007669"/>
    <property type="project" value="InterPro"/>
</dbReference>
<dbReference type="GO" id="GO:0007165">
    <property type="term" value="P:signal transduction"/>
    <property type="evidence" value="ECO:0007669"/>
    <property type="project" value="InterPro"/>
</dbReference>
<dbReference type="CDD" id="cd04138">
    <property type="entry name" value="H_N_K_Ras_like"/>
    <property type="match status" value="1"/>
</dbReference>
<dbReference type="FunFam" id="3.40.50.300:FF:000080">
    <property type="entry name" value="Ras-like GTPase Ras1"/>
    <property type="match status" value="1"/>
</dbReference>
<dbReference type="Gene3D" id="3.40.50.300">
    <property type="entry name" value="P-loop containing nucleotide triphosphate hydrolases"/>
    <property type="match status" value="1"/>
</dbReference>
<dbReference type="InterPro" id="IPR027417">
    <property type="entry name" value="P-loop_NTPase"/>
</dbReference>
<dbReference type="InterPro" id="IPR005225">
    <property type="entry name" value="Small_GTP-bd"/>
</dbReference>
<dbReference type="InterPro" id="IPR001806">
    <property type="entry name" value="Small_GTPase"/>
</dbReference>
<dbReference type="InterPro" id="IPR020849">
    <property type="entry name" value="Small_GTPase_Ras-type"/>
</dbReference>
<dbReference type="NCBIfam" id="TIGR00231">
    <property type="entry name" value="small_GTP"/>
    <property type="match status" value="1"/>
</dbReference>
<dbReference type="PANTHER" id="PTHR24070">
    <property type="entry name" value="RAS, DI-RAS, AND RHEB FAMILY MEMBERS OF SMALL GTPASE SUPERFAMILY"/>
    <property type="match status" value="1"/>
</dbReference>
<dbReference type="Pfam" id="PF00071">
    <property type="entry name" value="Ras"/>
    <property type="match status" value="1"/>
</dbReference>
<dbReference type="PRINTS" id="PR00449">
    <property type="entry name" value="RASTRNSFRMNG"/>
</dbReference>
<dbReference type="SMART" id="SM00175">
    <property type="entry name" value="RAB"/>
    <property type="match status" value="1"/>
</dbReference>
<dbReference type="SMART" id="SM00176">
    <property type="entry name" value="RAN"/>
    <property type="match status" value="1"/>
</dbReference>
<dbReference type="SMART" id="SM00173">
    <property type="entry name" value="RAS"/>
    <property type="match status" value="1"/>
</dbReference>
<dbReference type="SMART" id="SM00174">
    <property type="entry name" value="RHO"/>
    <property type="match status" value="1"/>
</dbReference>
<dbReference type="SUPFAM" id="SSF52540">
    <property type="entry name" value="P-loop containing nucleoside triphosphate hydrolases"/>
    <property type="match status" value="1"/>
</dbReference>
<dbReference type="PROSITE" id="PS51421">
    <property type="entry name" value="RAS"/>
    <property type="match status" value="1"/>
</dbReference>
<feature type="chain" id="PRO_0000449941" description="Ras-like protein 2">
    <location>
        <begin position="1"/>
        <end position="214"/>
    </location>
</feature>
<feature type="propeptide" id="PRO_0000449942" description="Removed in mature form" evidence="2">
    <location>
        <begin position="212"/>
        <end position="214"/>
    </location>
</feature>
<feature type="region of interest" description="Disordered" evidence="3">
    <location>
        <begin position="178"/>
        <end position="197"/>
    </location>
</feature>
<feature type="short sequence motif" description="Effector region" evidence="2">
    <location>
        <begin position="38"/>
        <end position="46"/>
    </location>
</feature>
<feature type="binding site" evidence="1">
    <location>
        <begin position="19"/>
        <end position="24"/>
    </location>
    <ligand>
        <name>GTP</name>
        <dbReference type="ChEBI" id="CHEBI:37565"/>
    </ligand>
</feature>
<feature type="binding site" evidence="1">
    <location>
        <begin position="35"/>
        <end position="41"/>
    </location>
    <ligand>
        <name>GTP</name>
        <dbReference type="ChEBI" id="CHEBI:37565"/>
    </ligand>
</feature>
<feature type="binding site" evidence="1">
    <location>
        <begin position="65"/>
        <end position="66"/>
    </location>
    <ligand>
        <name>GTP</name>
        <dbReference type="ChEBI" id="CHEBI:37565"/>
    </ligand>
</feature>
<feature type="binding site" evidence="1">
    <location>
        <begin position="122"/>
        <end position="125"/>
    </location>
    <ligand>
        <name>GTP</name>
        <dbReference type="ChEBI" id="CHEBI:37565"/>
    </ligand>
</feature>
<feature type="binding site" evidence="1">
    <location>
        <begin position="152"/>
        <end position="154"/>
    </location>
    <ligand>
        <name>GTP</name>
        <dbReference type="ChEBI" id="CHEBI:37565"/>
    </ligand>
</feature>
<feature type="modified residue" description="Cysteine methyl ester" evidence="2">
    <location>
        <position position="211"/>
    </location>
</feature>
<feature type="lipid moiety-binding region" description="S-farnesyl cysteine" evidence="10">
    <location>
        <position position="211"/>
    </location>
</feature>
<feature type="mutagenesis site" description="Dominant active allele; bypasses surface attachment for appressorium formation and forms abnormal appresoria on hydrophilic surfaces." evidence="5">
    <original>G</original>
    <variation>V</variation>
    <location>
        <position position="18"/>
    </location>
</feature>
<feature type="mutagenesis site" description="Prevents farnesylation and restricts subcellular location to the cytoplasm in appressorium, mycelium, conidium and infection hyphae." evidence="6">
    <original>C</original>
    <variation>S</variation>
    <location>
        <position position="211"/>
    </location>
</feature>
<evidence type="ECO:0000250" key="1">
    <source>
        <dbReference type="UniProtKB" id="P01112"/>
    </source>
</evidence>
<evidence type="ECO:0000250" key="2">
    <source>
        <dbReference type="UniProtKB" id="P01120"/>
    </source>
</evidence>
<evidence type="ECO:0000256" key="3">
    <source>
        <dbReference type="SAM" id="MobiDB-lite"/>
    </source>
</evidence>
<evidence type="ECO:0000269" key="4">
    <source>
    </source>
</evidence>
<evidence type="ECO:0000269" key="5">
    <source>
    </source>
</evidence>
<evidence type="ECO:0000269" key="6">
    <source>
    </source>
</evidence>
<evidence type="ECO:0000303" key="7">
    <source>
    </source>
</evidence>
<evidence type="ECO:0000303" key="8">
    <source>
    </source>
</evidence>
<evidence type="ECO:0000305" key="9"/>
<evidence type="ECO:0000305" key="10">
    <source>
    </source>
</evidence>
<organism>
    <name type="scientific">Pyricularia oryzae (strain 70-15 / ATCC MYA-4617 / FGSC 8958)</name>
    <name type="common">Rice blast fungus</name>
    <name type="synonym">Magnaporthe oryzae</name>
    <dbReference type="NCBI Taxonomy" id="242507"/>
    <lineage>
        <taxon>Eukaryota</taxon>
        <taxon>Fungi</taxon>
        <taxon>Dikarya</taxon>
        <taxon>Ascomycota</taxon>
        <taxon>Pezizomycotina</taxon>
        <taxon>Sordariomycetes</taxon>
        <taxon>Sordariomycetidae</taxon>
        <taxon>Magnaporthales</taxon>
        <taxon>Pyriculariaceae</taxon>
        <taxon>Pyricularia</taxon>
    </lineage>
</organism>
<name>RAS2_PYRO7</name>
<gene>
    <name evidence="7 8" type="primary">RAS2</name>
    <name type="ORF">MGG_06154</name>
</gene>
<reference key="1">
    <citation type="journal article" date="2005" name="Nature">
        <title>The genome sequence of the rice blast fungus Magnaporthe grisea.</title>
        <authorList>
            <person name="Dean R.A."/>
            <person name="Talbot N.J."/>
            <person name="Ebbole D.J."/>
            <person name="Farman M.L."/>
            <person name="Mitchell T.K."/>
            <person name="Orbach M.J."/>
            <person name="Thon M.R."/>
            <person name="Kulkarni R."/>
            <person name="Xu J.-R."/>
            <person name="Pan H."/>
            <person name="Read N.D."/>
            <person name="Lee Y.-H."/>
            <person name="Carbone I."/>
            <person name="Brown D."/>
            <person name="Oh Y.Y."/>
            <person name="Donofrio N."/>
            <person name="Jeong J.S."/>
            <person name="Soanes D.M."/>
            <person name="Djonovic S."/>
            <person name="Kolomiets E."/>
            <person name="Rehmeyer C."/>
            <person name="Li W."/>
            <person name="Harding M."/>
            <person name="Kim S."/>
            <person name="Lebrun M.-H."/>
            <person name="Bohnert H."/>
            <person name="Coughlan S."/>
            <person name="Butler J."/>
            <person name="Calvo S.E."/>
            <person name="Ma L.-J."/>
            <person name="Nicol R."/>
            <person name="Purcell S."/>
            <person name="Nusbaum C."/>
            <person name="Galagan J.E."/>
            <person name="Birren B.W."/>
        </authorList>
    </citation>
    <scope>NUCLEOTIDE SEQUENCE [LARGE SCALE GENOMIC DNA]</scope>
    <source>
        <strain>70-15 / ATCC MYA-4617 / FGSC 8958</strain>
    </source>
</reference>
<reference key="2">
    <citation type="journal article" date="2006" name="Plant Cell">
        <title>Multiple upstream signals converge on the adaptor protein Mst50 in Magnaporthe grisea.</title>
        <authorList>
            <person name="Park G."/>
            <person name="Xue C."/>
            <person name="Zhao X."/>
            <person name="Kim Y."/>
            <person name="Orbach M."/>
            <person name="Xu J.R."/>
        </authorList>
    </citation>
    <scope>INTERACTION WITH MST50</scope>
</reference>
<reference key="3">
    <citation type="journal article" date="2014" name="Mol. Plant Microbe Interact.">
        <title>Bypassing both surface attachment and surface recognition requirements for appressorium formation by overactive ras signaling in Magnaporthe oryzae.</title>
        <authorList>
            <person name="Zhou X."/>
            <person name="Zhao X."/>
            <person name="Xue C."/>
            <person name="Dai Y."/>
            <person name="Xu J.R."/>
        </authorList>
    </citation>
    <scope>FUNCTION</scope>
    <scope>MUTAGENESIS OF GLY-18</scope>
</reference>
<reference key="4">
    <citation type="journal article" date="2019" name="Mol. Plant Pathol.">
        <title>The farnesyltransferase beta-subunit RAM1 regulates localization of RAS proteins and appressorium-mediated infection in Magnaporthe oryzae.</title>
        <authorList>
            <person name="Aboelfotoh Hendy A."/>
            <person name="Xing J."/>
            <person name="Chen X."/>
            <person name="Chen X.L."/>
        </authorList>
    </citation>
    <scope>SUBCELLULAR LOCATION</scope>
    <scope>INTERACTION WITH RAM1</scope>
    <scope>MUTAGENESIS OF CYS-211</scope>
    <scope>ISOPRENYLATION AT CYS-211</scope>
</reference>
<proteinExistence type="evidence at protein level"/>
<keyword id="KW-1003">Cell membrane</keyword>
<keyword id="KW-0342">GTP-binding</keyword>
<keyword id="KW-0449">Lipoprotein</keyword>
<keyword id="KW-0472">Membrane</keyword>
<keyword id="KW-0488">Methylation</keyword>
<keyword id="KW-0547">Nucleotide-binding</keyword>
<keyword id="KW-0636">Prenylation</keyword>
<keyword id="KW-1185">Reference proteome</keyword>
<comment type="function">
    <text evidence="2 5">Modulates the activity of the adenylate cyclase catalytic subunit and therefore affects the biosynthesis of cyclic-AMP (By similarity). Plays a role in both surface attachment and surface recognition of appressoria, a highly specialized infection structure for plant penetration. Regulates appressorium formation by coordinated regulation of cAMP signaling and Pmk1 MAPK pathways (PubMed:24835254).</text>
</comment>
<comment type="activity regulation">
    <text evidence="2">Alternates between an inactive form bound to GDP and an active form bound to GTP. Activated by a guanine nucleotide-exchange factor (GEF) and inactivated by a GTPase-activating protein (GAP).</text>
</comment>
<comment type="subunit">
    <text evidence="6">Interacts with farnesyltransferase beta subunit RAM1.</text>
</comment>
<comment type="subcellular location">
    <subcellularLocation>
        <location evidence="6">Cell membrane</location>
        <topology evidence="6">Lipid-anchor</topology>
        <orientation evidence="4">Cytoplasmic side</orientation>
    </subcellularLocation>
</comment>
<comment type="similarity">
    <text evidence="9">Belongs to the small GTPase superfamily. Ras family.</text>
</comment>
<accession>G4MZY8</accession>
<protein>
    <recommendedName>
        <fullName>Ras-like protein 2</fullName>
    </recommendedName>
</protein>